<name>SEC16_YEAST</name>
<accession>P48415</accession>
<accession>D6W3T2</accession>
<accession>Q02822</accession>
<keyword id="KW-0002">3D-structure</keyword>
<keyword id="KW-0072">Autophagy</keyword>
<keyword id="KW-0256">Endoplasmic reticulum</keyword>
<keyword id="KW-0931">ER-Golgi transport</keyword>
<keyword id="KW-0472">Membrane</keyword>
<keyword id="KW-0597">Phosphoprotein</keyword>
<keyword id="KW-0653">Protein transport</keyword>
<keyword id="KW-1185">Reference proteome</keyword>
<keyword id="KW-0813">Transport</keyword>
<organism>
    <name type="scientific">Saccharomyces cerevisiae (strain ATCC 204508 / S288c)</name>
    <name type="common">Baker's yeast</name>
    <dbReference type="NCBI Taxonomy" id="559292"/>
    <lineage>
        <taxon>Eukaryota</taxon>
        <taxon>Fungi</taxon>
        <taxon>Dikarya</taxon>
        <taxon>Ascomycota</taxon>
        <taxon>Saccharomycotina</taxon>
        <taxon>Saccharomycetes</taxon>
        <taxon>Saccharomycetales</taxon>
        <taxon>Saccharomycetaceae</taxon>
        <taxon>Saccharomyces</taxon>
    </lineage>
</organism>
<sequence length="2195" mass="241696">MTPEAKKRKNQKKKLKQKQKKAAEKAASHSEEPLELPESTINSSFNDDSVNRTESDIASKSDVPPVSSSTNISPANETQLEIPDTQELHHKLLNDSDQHDITADSNDLPDNSIVEHDSVITQTKPAMSQEYEETAAHLSSRNPSLDVVAGELHNNNEHTQKIAVSAVEEDSFNEEEGENHDSIIISSLNDATPSQYNHFLPSDGNLLSPELSSGDTPTHNVPLGTKDNEINDDEYCNDKEISLNANNVLPDELSKEEDERLKLETHVSTEEKKQDIADQETAENLFTSSTEPSENKIRNSGDDTSMLFQDDESDQKVPWEEDVKKDFHNENTNNTQESAPNTDDRDKGYEGNEALKKSESCTAADERSYSEETSEDIFHGHDKQVVEGQNDFTGKNIENESQKLMGEGNHKLPLSAEADIIEPGKDIQDQAEDLFTQSSGDLGEVLPWESTDKNADVTSKSQEKHEDLFAASGNDEKLPWEVSDGEVSSGKTENSMQTSTEKIAEQKFSFLENDDDLLDDDDSFLASSEEEDTVPNTDNTTNLTSKPVEEKKASRYKPIIEEEAGMRQEQVHFTNTTGIVTPQQFHGLTKTGLGTPNQQVSVPNIVSPKPPVVKDNRSNFKINEEKKKSDAYDFPLEIISESSKKGHAKPVAVPTQRFGSGNSFSSLDKPIPQSRKGSNNSNRPPVIPLGTQEPRSSRTNSAISQSPVNYAFPNPYKIQQLQQAPIQSGMPLPNTNIPPPALKVETTVSAPPIRARGVSNASVGSSASFGARHATQYGLNNGVPPVSPYGQATINLPTANKYAPVSPTVQQKQYPSVVQNLGASAVNTPNFVKTHRGHTSSISSYTPNQNEHASRYAPNYQQSYQVPYTSQPVGPVAGNSSYQSQTRSSYAVPMMPQAQTSASIQPHANIQPPTGILPLAPLRPLDPLQAATNLQPRASNITAANSLPLANLPLAENILPEIITHRATSSVAPPRQENNPIKIDNEALLRRQFPIFHWSAANKVVYAVPPIPDQSQYMISSSIVQEIKVTPIDQIIKPNDMLKSFPGPLGSAKLKKKDLTKWMETTIKSISENESSTDMTIWQLLEMKLNDKVNWKNISKLLYNSDELLMYLSQPFPNGDMIPNAYRLDINCQMRVLAFLQTGNHDEALRLALSKRDYAIALLVGSLMGKDRWSEVIQKYLYEGFTAGPNDQKELAHFLLLIFQVFVGNSKMAIKSFYTNNETSQWASENWKSIVAAVLINIPENNEDPLLIPPVVLEFLIEFGIFLTKKGLTAAASTLFIIGNVPLSNEPVMADSDVIFESIGNMNTFESILWDEIYEYIFSYDPKFKGFSSILPQKIYHASLLQEQGLNSLGTKYTDYLSSSVRKLPKKDILTINLTRELSEVASRLSESNTGWLAKPKLSSVWGQLDKSFNKYIGGDDIDALNKKNDKKKVFDGFTPGSSANSSTVDLTQTFTPFQAQVTSQSYVDTTALLHNAHNVPSHSVLHSKPSNVSKGLVEANLPYTHRIGDSLQGSPQRIHNTQFAAAEPQMASLRRVRTDQHTNEKALKSQQILEKKSTAYTPQFGQNHSVPMEKSNSNVPSLFADFPAPPKLGTVPSNYVSSPDLVRRESIISTGSEFLPPPKIGVPTKANSSQGSLMYSPSVEALPIDPVVPQVHETGYNDFGNKHSQKSMPEDESHTSHDNSNADQNTLKDSADVTDETMDIEGPGFNDVKNLLPMEPNHQPTSTVNPIQTISDDIQPILQTNVEVRGTDASKMENSLPSIENERSSEEQPENISKSASSAYLPSTGGLSLENRPLTQDENSISETVQSTYLPAGSISMEAKPISQVQDVPRNVNNKASKLVEQHMAPPKPKSTDATKMNYSPYVPQSTAASADGDESTILKTSPAIYARTHQAHASNPSQYFPLVNQANETASFELSESTSQAQSNGNVASENRFSPIKKAEVVEKDTFQPTIRKASTNQYRAFKPLESDADKYNDVIEDESDDDNMSTDEAKNRKEEKKNVNMKKETKPSNKDIDDKSNGWFGWLKKDTGDKKVYKAKLGHKNTLYYDEKLKRWVNKDATEEEKQKIIESSAPPPPPIVKRKDGGPKTKPRSGPINNSLPPVHATSVIPNNPITGEPLPIKTSPSPTGPNPNNSPSPSSPISRISGVNLTSKKANGLDDLLSLAGGPKPASTRRKKKTARGYVNVMDNIQ</sequence>
<reference key="1">
    <citation type="journal article" date="1995" name="J. Cell Biol.">
        <title>Yeast SEC16 gene encodes a multidomain vesicle coat protein that interacts with Sec23p.</title>
        <authorList>
            <person name="Espenshade P.J."/>
            <person name="Gimeno R.E."/>
            <person name="Holzmacher E."/>
            <person name="Teung P."/>
            <person name="Kaiser C.A."/>
        </authorList>
    </citation>
    <scope>NUCLEOTIDE SEQUENCE [GENOMIC DNA]</scope>
    <scope>FUNCTION</scope>
    <scope>SUBCELLULAR LOCATION</scope>
    <scope>MUTAGENESIS OF LEU-1059; LEU-1084; LEU-1089 AND TRP-1231</scope>
    <scope>INTERACTION WITH SEC23</scope>
</reference>
<reference key="2">
    <citation type="journal article" date="1997" name="Nature">
        <title>The nucleotide sequence of Saccharomyces cerevisiae chromosome XVI.</title>
        <authorList>
            <person name="Bussey H."/>
            <person name="Storms R.K."/>
            <person name="Ahmed A."/>
            <person name="Albermann K."/>
            <person name="Allen E."/>
            <person name="Ansorge W."/>
            <person name="Araujo R."/>
            <person name="Aparicio A."/>
            <person name="Barrell B.G."/>
            <person name="Badcock K."/>
            <person name="Benes V."/>
            <person name="Botstein D."/>
            <person name="Bowman S."/>
            <person name="Brueckner M."/>
            <person name="Carpenter J."/>
            <person name="Cherry J.M."/>
            <person name="Chung E."/>
            <person name="Churcher C.M."/>
            <person name="Coster F."/>
            <person name="Davis K."/>
            <person name="Davis R.W."/>
            <person name="Dietrich F.S."/>
            <person name="Delius H."/>
            <person name="DiPaolo T."/>
            <person name="Dubois E."/>
            <person name="Duesterhoeft A."/>
            <person name="Duncan M."/>
            <person name="Floeth M."/>
            <person name="Fortin N."/>
            <person name="Friesen J.D."/>
            <person name="Fritz C."/>
            <person name="Goffeau A."/>
            <person name="Hall J."/>
            <person name="Hebling U."/>
            <person name="Heumann K."/>
            <person name="Hilbert H."/>
            <person name="Hillier L.W."/>
            <person name="Hunicke-Smith S."/>
            <person name="Hyman R.W."/>
            <person name="Johnston M."/>
            <person name="Kalman S."/>
            <person name="Kleine K."/>
            <person name="Komp C."/>
            <person name="Kurdi O."/>
            <person name="Lashkari D."/>
            <person name="Lew H."/>
            <person name="Lin A."/>
            <person name="Lin D."/>
            <person name="Louis E.J."/>
            <person name="Marathe R."/>
            <person name="Messenguy F."/>
            <person name="Mewes H.-W."/>
            <person name="Mirtipati S."/>
            <person name="Moestl D."/>
            <person name="Mueller-Auer S."/>
            <person name="Namath A."/>
            <person name="Nentwich U."/>
            <person name="Oefner P."/>
            <person name="Pearson D."/>
            <person name="Petel F.X."/>
            <person name="Pohl T.M."/>
            <person name="Purnelle B."/>
            <person name="Rajandream M.A."/>
            <person name="Rechmann S."/>
            <person name="Rieger M."/>
            <person name="Riles L."/>
            <person name="Roberts D."/>
            <person name="Schaefer M."/>
            <person name="Scharfe M."/>
            <person name="Scherens B."/>
            <person name="Schramm S."/>
            <person name="Schroeder M."/>
            <person name="Sdicu A.-M."/>
            <person name="Tettelin H."/>
            <person name="Urrestarazu L.A."/>
            <person name="Ushinsky S."/>
            <person name="Vierendeels F."/>
            <person name="Vissers S."/>
            <person name="Voss H."/>
            <person name="Walsh S.V."/>
            <person name="Wambutt R."/>
            <person name="Wang Y."/>
            <person name="Wedler E."/>
            <person name="Wedler H."/>
            <person name="Winnett E."/>
            <person name="Zhong W.-W."/>
            <person name="Zollner A."/>
            <person name="Vo D.H."/>
            <person name="Hani J."/>
        </authorList>
    </citation>
    <scope>NUCLEOTIDE SEQUENCE [LARGE SCALE GENOMIC DNA]</scope>
    <source>
        <strain>ATCC 204508 / S288c</strain>
    </source>
</reference>
<reference key="3">
    <citation type="journal article" date="2014" name="G3 (Bethesda)">
        <title>The reference genome sequence of Saccharomyces cerevisiae: Then and now.</title>
        <authorList>
            <person name="Engel S.R."/>
            <person name="Dietrich F.S."/>
            <person name="Fisk D.G."/>
            <person name="Binkley G."/>
            <person name="Balakrishnan R."/>
            <person name="Costanzo M.C."/>
            <person name="Dwight S.S."/>
            <person name="Hitz B.C."/>
            <person name="Karra K."/>
            <person name="Nash R.S."/>
            <person name="Weng S."/>
            <person name="Wong E.D."/>
            <person name="Lloyd P."/>
            <person name="Skrzypek M.S."/>
            <person name="Miyasato S.R."/>
            <person name="Simison M."/>
            <person name="Cherry J.M."/>
        </authorList>
    </citation>
    <scope>GENOME REANNOTATION</scope>
    <source>
        <strain>ATCC 204508 / S288c</strain>
    </source>
</reference>
<reference key="4">
    <citation type="journal article" date="1990" name="Cell">
        <title>Distinct sets of SEC genes govern transport vesicle formation and fusion early in the secretory pathway.</title>
        <authorList>
            <person name="Kaiser C.A."/>
            <person name="Schekman R.W."/>
        </authorList>
    </citation>
    <scope>FUNCTION</scope>
</reference>
<reference key="5">
    <citation type="journal article" date="1995" name="J. Cell Biol.">
        <title>SED4 encodes a yeast endoplasmic reticulum protein that binds Sec16p and participates in vesicle formation.</title>
        <authorList>
            <person name="Gimeno R.E."/>
            <person name="Espenshade P.J."/>
            <person name="Kaiser C.A."/>
        </authorList>
    </citation>
    <scope>FUNCTION</scope>
    <scope>INTERACTION WITH SED4</scope>
</reference>
<reference key="6">
    <citation type="journal article" date="1997" name="J. Biol. Chem.">
        <title>COPII subunit interactions in the assembly of the vesicle coat.</title>
        <authorList>
            <person name="Shaywitz D.A."/>
            <person name="Espenshade P.J."/>
            <person name="Gimeno R.E."/>
            <person name="Kaiser C.A."/>
        </authorList>
    </citation>
    <scope>FUNCTION</scope>
    <scope>INTERACTION WITH SEC31</scope>
</reference>
<reference key="7">
    <citation type="journal article" date="1997" name="Proc. Natl. Acad. Sci. U.S.A.">
        <title>Selective packaging of cargo molecules into endoplasmic reticulum-derived COPII vesicles.</title>
        <authorList>
            <person name="Campbell J.L."/>
            <person name="Schekman R.W."/>
        </authorList>
    </citation>
    <scope>FUNCTION</scope>
</reference>
<reference key="8">
    <citation type="journal article" date="1999" name="J. Biochem.">
        <title>Identification of SEC12, SED4, truncated SEC16, and EKS1/HRD3 as multicopy suppressors of ts mutants of Sar1 GTPase.</title>
        <authorList>
            <person name="Saito Y."/>
            <person name="Yamanushi T."/>
            <person name="Oka T."/>
            <person name="Nakano A."/>
        </authorList>
    </citation>
    <scope>FUNCTION</scope>
</reference>
<reference key="9">
    <citation type="journal article" date="2000" name="Mol. Biol. Cell">
        <title>Sec24p and Iss1p function interchangeably in transport vesicle formation from the endoplasmic reticulum in Saccharomyces cerevisiae.</title>
        <authorList>
            <person name="Kurihara T."/>
            <person name="Hamamoto S."/>
            <person name="Gimeno R.E."/>
            <person name="Kaiser C.A."/>
            <person name="Schekman R.W."/>
            <person name="Yoshihisa T."/>
        </authorList>
    </citation>
    <scope>FUNCTION</scope>
</reference>
<reference key="10">
    <citation type="journal article" date="2001" name="Mol. Biol. Cell">
        <title>Autophagosome requires specific early Sec proteins for its formation and NSF/SNARE for vacuolar fusion.</title>
        <authorList>
            <person name="Ishihara N."/>
            <person name="Hamasaki M."/>
            <person name="Yokota S."/>
            <person name="Suzuki K."/>
            <person name="Kamada Y."/>
            <person name="Kihara A."/>
            <person name="Yoshimori T."/>
            <person name="Noda T."/>
            <person name="Ohsumi Y."/>
        </authorList>
    </citation>
    <scope>FUNCTION</scope>
</reference>
<reference key="11">
    <citation type="journal article" date="2002" name="J. Cell Biol.">
        <title>Sec16p potentiates the action of COPII proteins to bud transport vesicles.</title>
        <authorList>
            <person name="Supek F."/>
            <person name="Madden D.T."/>
            <person name="Hamamoto S."/>
            <person name="Orci L."/>
            <person name="Schekman R.W."/>
        </authorList>
    </citation>
    <scope>FUNCTION</scope>
    <scope>SUBCELLULAR LOCATION</scope>
</reference>
<reference key="12">
    <citation type="journal article" date="2003" name="Nature">
        <title>Global analysis of protein localization in budding yeast.</title>
        <authorList>
            <person name="Huh W.-K."/>
            <person name="Falvo J.V."/>
            <person name="Gerke L.C."/>
            <person name="Carroll A.S."/>
            <person name="Howson R.W."/>
            <person name="Weissman J.S."/>
            <person name="O'Shea E.K."/>
        </authorList>
    </citation>
    <scope>SUBCELLULAR LOCATION [LARGE SCALE ANALYSIS]</scope>
</reference>
<reference key="13">
    <citation type="journal article" date="2003" name="Nature">
        <title>Global analysis of protein expression in yeast.</title>
        <authorList>
            <person name="Ghaemmaghami S."/>
            <person name="Huh W.-K."/>
            <person name="Bower K."/>
            <person name="Howson R.W."/>
            <person name="Belle A."/>
            <person name="Dephoure N."/>
            <person name="O'Shea E.K."/>
            <person name="Weissman J.S."/>
        </authorList>
    </citation>
    <scope>LEVEL OF PROTEIN EXPRESSION [LARGE SCALE ANALYSIS]</scope>
</reference>
<reference key="14">
    <citation type="journal article" date="2005" name="Mol. Cell. Proteomics">
        <title>Quantitative phosphoproteomics applied to the yeast pheromone signaling pathway.</title>
        <authorList>
            <person name="Gruhler A."/>
            <person name="Olsen J.V."/>
            <person name="Mohammed S."/>
            <person name="Mortensen P."/>
            <person name="Faergeman N.J."/>
            <person name="Mann M."/>
            <person name="Jensen O.N."/>
        </authorList>
    </citation>
    <scope>PHOSPHORYLATION [LARGE SCALE ANALYSIS] AT SER-607; SER-706; SER-1515 AND SER-1578</scope>
    <scope>IDENTIFICATION BY MASS SPECTROMETRY [LARGE SCALE ANALYSIS]</scope>
    <source>
        <strain>YAL6B</strain>
    </source>
</reference>
<reference key="15">
    <citation type="journal article" date="2007" name="J. Proteome Res.">
        <title>Large-scale phosphorylation analysis of alpha-factor-arrested Saccharomyces cerevisiae.</title>
        <authorList>
            <person name="Li X."/>
            <person name="Gerber S.A."/>
            <person name="Rudner A.D."/>
            <person name="Beausoleil S.A."/>
            <person name="Haas W."/>
            <person name="Villen J."/>
            <person name="Elias J.E."/>
            <person name="Gygi S.P."/>
        </authorList>
    </citation>
    <scope>PHOSPHORYLATION [LARGE SCALE ANALYSIS] AT SER-483; SER-674; SER-704; SER-706; SER-759; SER-762; SER-765; SER-843; SER-1511; SER-1515; SER-1603; SER-1611; SER-1986 AND THR-2049</scope>
    <scope>IDENTIFICATION BY MASS SPECTROMETRY [LARGE SCALE ANALYSIS]</scope>
    <source>
        <strain>ADR376</strain>
    </source>
</reference>
<reference key="16">
    <citation type="journal article" date="2008" name="Mol. Cell. Proteomics">
        <title>A multidimensional chromatography technology for in-depth phosphoproteome analysis.</title>
        <authorList>
            <person name="Albuquerque C.P."/>
            <person name="Smolka M.B."/>
            <person name="Payne S.H."/>
            <person name="Bafna V."/>
            <person name="Eng J."/>
            <person name="Zhou H."/>
        </authorList>
    </citation>
    <scope>PHOSPHORYLATION [LARGE SCALE ANALYSIS] AT SER-73; SER-144; SER-313; SER-607; SER-678; SER-681; SER-704; SER-706; SER-759; SER-1511; SER-1515; SER-1778; SER-1875; SER-1986 AND SER-2130</scope>
    <scope>IDENTIFICATION BY MASS SPECTROMETRY [LARGE SCALE ANALYSIS]</scope>
</reference>
<reference key="17">
    <citation type="journal article" date="2009" name="Science">
        <title>Global analysis of Cdk1 substrate phosphorylation sites provides insights into evolution.</title>
        <authorList>
            <person name="Holt L.J."/>
            <person name="Tuch B.B."/>
            <person name="Villen J."/>
            <person name="Johnson A.D."/>
            <person name="Gygi S.P."/>
            <person name="Morgan D.O."/>
        </authorList>
    </citation>
    <scope>PHOSPHORYLATION [LARGE SCALE ANALYSIS] AT SER-28; SER-313; SER-472; SER-483; THR-595; SER-607; SER-660; SER-663; SER-665; SER-674; SER-678; SER-681; SER-701; SER-704; SER-706; SER-759; SER-762; SER-765; SER-768; SER-1515; SER-1602; SER-1603; SER-1611; SER-1617; SER-1973; SER-1986 AND SER-1992</scope>
    <scope>IDENTIFICATION BY MASS SPECTROMETRY [LARGE SCALE ANALYSIS]</scope>
</reference>
<reference key="18">
    <citation type="journal article" date="2012" name="Proc. Natl. Acad. Sci. U.S.A.">
        <title>N-terminal acetylome analyses and functional insights of the N-terminal acetyltransferase NatB.</title>
        <authorList>
            <person name="Van Damme P."/>
            <person name="Lasa M."/>
            <person name="Polevoda B."/>
            <person name="Gazquez C."/>
            <person name="Elosegui-Artola A."/>
            <person name="Kim D.S."/>
            <person name="De Juan-Pardo E."/>
            <person name="Demeyer K."/>
            <person name="Hole K."/>
            <person name="Larrea E."/>
            <person name="Timmerman E."/>
            <person name="Prieto J."/>
            <person name="Arnesen T."/>
            <person name="Sherman F."/>
            <person name="Gevaert K."/>
            <person name="Aldabe R."/>
        </authorList>
    </citation>
    <scope>IDENTIFICATION BY MASS SPECTROMETRY [LARGE SCALE ANALYSIS]</scope>
</reference>
<evidence type="ECO:0000256" key="1">
    <source>
        <dbReference type="SAM" id="MobiDB-lite"/>
    </source>
</evidence>
<evidence type="ECO:0000269" key="2">
    <source>
    </source>
</evidence>
<evidence type="ECO:0000269" key="3">
    <source>
    </source>
</evidence>
<evidence type="ECO:0000269" key="4">
    <source>
    </source>
</evidence>
<evidence type="ECO:0000269" key="5">
    <source>
    </source>
</evidence>
<evidence type="ECO:0000269" key="6">
    <source>
    </source>
</evidence>
<evidence type="ECO:0000269" key="7">
    <source>
    </source>
</evidence>
<evidence type="ECO:0000269" key="8">
    <source>
    </source>
</evidence>
<evidence type="ECO:0000269" key="9">
    <source>
    </source>
</evidence>
<evidence type="ECO:0000269" key="10">
    <source>
    </source>
</evidence>
<evidence type="ECO:0000269" key="11">
    <source>
    </source>
</evidence>
<evidence type="ECO:0000269" key="12">
    <source>
    </source>
</evidence>
<evidence type="ECO:0000305" key="13"/>
<evidence type="ECO:0007744" key="14">
    <source>
    </source>
</evidence>
<evidence type="ECO:0007744" key="15">
    <source>
    </source>
</evidence>
<evidence type="ECO:0007744" key="16">
    <source>
    </source>
</evidence>
<evidence type="ECO:0007744" key="17">
    <source>
    </source>
</evidence>
<evidence type="ECO:0007829" key="18">
    <source>
        <dbReference type="PDB" id="3MZK"/>
    </source>
</evidence>
<protein>
    <recommendedName>
        <fullName>COPII coat assembly protein SEC16</fullName>
    </recommendedName>
    <alternativeName>
        <fullName>Protein transport protein SEC16</fullName>
    </alternativeName>
</protein>
<dbReference type="EMBL" id="U23819">
    <property type="protein sequence ID" value="AAC49088.1"/>
    <property type="molecule type" value="Genomic_DNA"/>
</dbReference>
<dbReference type="EMBL" id="U41849">
    <property type="protein sequence ID" value="AAB68254.1"/>
    <property type="molecule type" value="Genomic_DNA"/>
</dbReference>
<dbReference type="EMBL" id="BK006949">
    <property type="protein sequence ID" value="DAA11348.1"/>
    <property type="molecule type" value="Genomic_DNA"/>
</dbReference>
<dbReference type="PIR" id="S61103">
    <property type="entry name" value="S61103"/>
</dbReference>
<dbReference type="RefSeq" id="NP_015240.1">
    <property type="nucleotide sequence ID" value="NM_001183899.1"/>
</dbReference>
<dbReference type="PDB" id="3MZK">
    <property type="method" value="X-ray"/>
    <property type="resolution" value="2.69 A"/>
    <property type="chains" value="B/C=984-1420"/>
</dbReference>
<dbReference type="PDBsum" id="3MZK"/>
<dbReference type="SMR" id="P48415"/>
<dbReference type="BioGRID" id="36096">
    <property type="interactions" value="347"/>
</dbReference>
<dbReference type="DIP" id="DIP-5815N"/>
<dbReference type="FunCoup" id="P48415">
    <property type="interactions" value="147"/>
</dbReference>
<dbReference type="IntAct" id="P48415">
    <property type="interactions" value="61"/>
</dbReference>
<dbReference type="MINT" id="P48415"/>
<dbReference type="STRING" id="4932.YPL085W"/>
<dbReference type="MoonDB" id="P48415">
    <property type="type" value="Predicted"/>
</dbReference>
<dbReference type="GlyGen" id="P48415">
    <property type="glycosylation" value="12 sites, 1 O-linked glycan (11 sites)"/>
</dbReference>
<dbReference type="iPTMnet" id="P48415"/>
<dbReference type="PaxDb" id="4932-YPL085W"/>
<dbReference type="PeptideAtlas" id="P48415"/>
<dbReference type="EnsemblFungi" id="YPL085W_mRNA">
    <property type="protein sequence ID" value="YPL085W"/>
    <property type="gene ID" value="YPL085W"/>
</dbReference>
<dbReference type="GeneID" id="856020"/>
<dbReference type="KEGG" id="sce:YPL085W"/>
<dbReference type="AGR" id="SGD:S000006006"/>
<dbReference type="SGD" id="S000006006">
    <property type="gene designation" value="SEC16"/>
</dbReference>
<dbReference type="VEuPathDB" id="FungiDB:YPL085W"/>
<dbReference type="eggNOG" id="KOG1913">
    <property type="taxonomic scope" value="Eukaryota"/>
</dbReference>
<dbReference type="GeneTree" id="ENSGT00940000171999"/>
<dbReference type="HOGENOM" id="CLU_000768_0_0_1"/>
<dbReference type="InParanoid" id="P48415"/>
<dbReference type="OMA" id="YKSPYDL"/>
<dbReference type="OrthoDB" id="8918678at2759"/>
<dbReference type="BioCyc" id="YEAST:G3O-33991-MONOMER"/>
<dbReference type="Reactome" id="R-SCE-204005">
    <property type="pathway name" value="COPII-mediated vesicle transport"/>
</dbReference>
<dbReference type="BioGRID-ORCS" id="856020">
    <property type="hits" value="4 hits in 10 CRISPR screens"/>
</dbReference>
<dbReference type="EvolutionaryTrace" id="P48415"/>
<dbReference type="PRO" id="PR:P48415"/>
<dbReference type="Proteomes" id="UP000002311">
    <property type="component" value="Chromosome XVI"/>
</dbReference>
<dbReference type="RNAct" id="P48415">
    <property type="molecule type" value="protein"/>
</dbReference>
<dbReference type="GO" id="GO:0070971">
    <property type="term" value="C:endoplasmic reticulum exit site"/>
    <property type="evidence" value="ECO:0000314"/>
    <property type="project" value="SGD"/>
</dbReference>
<dbReference type="GO" id="GO:0005789">
    <property type="term" value="C:endoplasmic reticulum membrane"/>
    <property type="evidence" value="ECO:0007669"/>
    <property type="project" value="UniProtKB-SubCell"/>
</dbReference>
<dbReference type="GO" id="GO:0012507">
    <property type="term" value="C:ER to Golgi transport vesicle membrane"/>
    <property type="evidence" value="ECO:0000314"/>
    <property type="project" value="SGD"/>
</dbReference>
<dbReference type="GO" id="GO:0043495">
    <property type="term" value="F:protein-membrane adaptor activity"/>
    <property type="evidence" value="ECO:0000314"/>
    <property type="project" value="SGD"/>
</dbReference>
<dbReference type="GO" id="GO:0048208">
    <property type="term" value="P:COPII vesicle coating"/>
    <property type="evidence" value="ECO:0000314"/>
    <property type="project" value="SGD"/>
</dbReference>
<dbReference type="GO" id="GO:0007030">
    <property type="term" value="P:Golgi organization"/>
    <property type="evidence" value="ECO:0000318"/>
    <property type="project" value="GO_Central"/>
</dbReference>
<dbReference type="GO" id="GO:0016236">
    <property type="term" value="P:macroautophagy"/>
    <property type="evidence" value="ECO:0000315"/>
    <property type="project" value="SGD"/>
</dbReference>
<dbReference type="GO" id="GO:0070973">
    <property type="term" value="P:protein localization to endoplasmic reticulum exit site"/>
    <property type="evidence" value="ECO:0000315"/>
    <property type="project" value="SGD"/>
</dbReference>
<dbReference type="GO" id="GO:0015031">
    <property type="term" value="P:protein transport"/>
    <property type="evidence" value="ECO:0007669"/>
    <property type="project" value="UniProtKB-KW"/>
</dbReference>
<dbReference type="CDD" id="cd09233">
    <property type="entry name" value="ACE1-Sec16-like"/>
    <property type="match status" value="1"/>
</dbReference>
<dbReference type="Gene3D" id="1.20.58.940">
    <property type="match status" value="1"/>
</dbReference>
<dbReference type="Gene3D" id="6.20.50.30">
    <property type="match status" value="1"/>
</dbReference>
<dbReference type="InterPro" id="IPR024340">
    <property type="entry name" value="Sec16_CCD"/>
</dbReference>
<dbReference type="InterPro" id="IPR024468">
    <property type="entry name" value="Sec16_N"/>
</dbReference>
<dbReference type="InterPro" id="IPR024298">
    <property type="entry name" value="Sec16_Sec23-bd"/>
</dbReference>
<dbReference type="PANTHER" id="PTHR13402">
    <property type="entry name" value="RGPR-RELATED"/>
    <property type="match status" value="1"/>
</dbReference>
<dbReference type="PANTHER" id="PTHR13402:SF6">
    <property type="entry name" value="SECRETORY 16, ISOFORM I"/>
    <property type="match status" value="1"/>
</dbReference>
<dbReference type="Pfam" id="PF12932">
    <property type="entry name" value="Sec16"/>
    <property type="match status" value="1"/>
</dbReference>
<dbReference type="Pfam" id="PF12935">
    <property type="entry name" value="Sec16_N"/>
    <property type="match status" value="1"/>
</dbReference>
<dbReference type="Pfam" id="PF12931">
    <property type="entry name" value="TPR_Sec16"/>
    <property type="match status" value="1"/>
</dbReference>
<gene>
    <name type="primary">SEC16</name>
    <name type="ordered locus">YPL085W</name>
    <name type="ORF">LPF1W</name>
</gene>
<comment type="function">
    <text evidence="2 3 4 7 8 9 10 11 12">Involved in the initiation of assembly of the COPII coat required for the formation of transport vesicles from the endoplasmic reticulum (ER) and the selection of cargo molecules. Also involved in autophagy.</text>
</comment>
<comment type="subunit">
    <text evidence="8 9 11">Interacts with SEC23, SEC31 and SED4.</text>
</comment>
<comment type="interaction">
    <interactant intactId="EBI-16551">
        <id>P48415</id>
    </interactant>
    <interactant intactId="EBI-16584">
        <id>P15303</id>
        <label>SEC23</label>
    </interactant>
    <organismsDiffer>false</organismsDiffer>
    <experiments>6</experiments>
</comment>
<comment type="interaction">
    <interactant intactId="EBI-16551">
        <id>P48415</id>
    </interactant>
    <interactant intactId="EBI-20524">
        <id>P38968</id>
        <label>SEC31</label>
    </interactant>
    <organismsDiffer>false</organismsDiffer>
    <experiments>3</experiments>
</comment>
<comment type="subcellular location">
    <subcellularLocation>
        <location evidence="4 5 8">Endoplasmic reticulum membrane</location>
        <topology evidence="4 5 8">Peripheral membrane protein</topology>
        <orientation evidence="4 5 8">Cytoplasmic side</orientation>
    </subcellularLocation>
    <text>On the endoplasmic reticulum and on vesicles which bud from it.</text>
</comment>
<comment type="miscellaneous">
    <text evidence="6">Present with 358 molecules/cell in log phase SD medium.</text>
</comment>
<comment type="similarity">
    <text evidence="13">Belongs to the SEC16 family.</text>
</comment>
<proteinExistence type="evidence at protein level"/>
<feature type="chain" id="PRO_0000097658" description="COPII coat assembly protein SEC16">
    <location>
        <begin position="1"/>
        <end position="2195"/>
    </location>
</feature>
<feature type="region of interest" description="Disordered" evidence="1">
    <location>
        <begin position="1"/>
        <end position="112"/>
    </location>
</feature>
<feature type="region of interest" description="Disordered" evidence="1">
    <location>
        <begin position="201"/>
        <end position="233"/>
    </location>
</feature>
<feature type="region of interest" description="Disordered" evidence="1">
    <location>
        <begin position="247"/>
        <end position="381"/>
    </location>
</feature>
<feature type="region of interest" description="Disordered" evidence="1">
    <location>
        <begin position="436"/>
        <end position="555"/>
    </location>
</feature>
<feature type="region of interest" description="Disordered" evidence="1">
    <location>
        <begin position="594"/>
        <end position="616"/>
    </location>
</feature>
<feature type="region of interest" description="Disordered" evidence="1">
    <location>
        <begin position="643"/>
        <end position="708"/>
    </location>
</feature>
<feature type="region of interest" description="Disordered" evidence="1">
    <location>
        <begin position="1656"/>
        <end position="1731"/>
    </location>
</feature>
<feature type="region of interest" description="Disordered" evidence="1">
    <location>
        <begin position="1751"/>
        <end position="1804"/>
    </location>
</feature>
<feature type="region of interest" description="Disordered" evidence="1">
    <location>
        <begin position="1917"/>
        <end position="1936"/>
    </location>
</feature>
<feature type="region of interest" description="Disordered" evidence="1">
    <location>
        <begin position="1976"/>
        <end position="2031"/>
    </location>
</feature>
<feature type="region of interest" description="Disordered" evidence="1">
    <location>
        <begin position="2054"/>
        <end position="2195"/>
    </location>
</feature>
<feature type="compositionally biased region" description="Basic residues" evidence="1">
    <location>
        <begin position="1"/>
        <end position="20"/>
    </location>
</feature>
<feature type="compositionally biased region" description="Basic and acidic residues" evidence="1">
    <location>
        <begin position="21"/>
        <end position="32"/>
    </location>
</feature>
<feature type="compositionally biased region" description="Basic and acidic residues" evidence="1">
    <location>
        <begin position="49"/>
        <end position="59"/>
    </location>
</feature>
<feature type="compositionally biased region" description="Polar residues" evidence="1">
    <location>
        <begin position="66"/>
        <end position="79"/>
    </location>
</feature>
<feature type="compositionally biased region" description="Basic and acidic residues" evidence="1">
    <location>
        <begin position="86"/>
        <end position="102"/>
    </location>
</feature>
<feature type="compositionally biased region" description="Polar residues" evidence="1">
    <location>
        <begin position="210"/>
        <end position="219"/>
    </location>
</feature>
<feature type="compositionally biased region" description="Basic and acidic residues" evidence="1">
    <location>
        <begin position="257"/>
        <end position="276"/>
    </location>
</feature>
<feature type="compositionally biased region" description="Polar residues" evidence="1">
    <location>
        <begin position="282"/>
        <end position="292"/>
    </location>
</feature>
<feature type="compositionally biased region" description="Basic and acidic residues" evidence="1">
    <location>
        <begin position="314"/>
        <end position="329"/>
    </location>
</feature>
<feature type="compositionally biased region" description="Polar residues" evidence="1">
    <location>
        <begin position="330"/>
        <end position="341"/>
    </location>
</feature>
<feature type="compositionally biased region" description="Basic and acidic residues" evidence="1">
    <location>
        <begin position="342"/>
        <end position="381"/>
    </location>
</feature>
<feature type="compositionally biased region" description="Basic and acidic residues" evidence="1">
    <location>
        <begin position="450"/>
        <end position="479"/>
    </location>
</feature>
<feature type="compositionally biased region" description="Polar residues" evidence="1">
    <location>
        <begin position="489"/>
        <end position="501"/>
    </location>
</feature>
<feature type="compositionally biased region" description="Acidic residues" evidence="1">
    <location>
        <begin position="512"/>
        <end position="533"/>
    </location>
</feature>
<feature type="compositionally biased region" description="Polar residues" evidence="1">
    <location>
        <begin position="534"/>
        <end position="545"/>
    </location>
</feature>
<feature type="compositionally biased region" description="Polar residues" evidence="1">
    <location>
        <begin position="594"/>
        <end position="604"/>
    </location>
</feature>
<feature type="compositionally biased region" description="Polar residues" evidence="1">
    <location>
        <begin position="657"/>
        <end position="666"/>
    </location>
</feature>
<feature type="compositionally biased region" description="Polar residues" evidence="1">
    <location>
        <begin position="693"/>
        <end position="708"/>
    </location>
</feature>
<feature type="compositionally biased region" description="Basic and acidic residues" evidence="1">
    <location>
        <begin position="1673"/>
        <end position="1682"/>
    </location>
</feature>
<feature type="compositionally biased region" description="Polar residues" evidence="1">
    <location>
        <begin position="1683"/>
        <end position="1693"/>
    </location>
</feature>
<feature type="compositionally biased region" description="Polar residues" evidence="1">
    <location>
        <begin position="1775"/>
        <end position="1786"/>
    </location>
</feature>
<feature type="compositionally biased region" description="Acidic residues" evidence="1">
    <location>
        <begin position="1981"/>
        <end position="1992"/>
    </location>
</feature>
<feature type="compositionally biased region" description="Basic and acidic residues" evidence="1">
    <location>
        <begin position="1994"/>
        <end position="2023"/>
    </location>
</feature>
<feature type="compositionally biased region" description="Basic and acidic residues" evidence="1">
    <location>
        <begin position="2054"/>
        <end position="2072"/>
    </location>
</feature>
<feature type="compositionally biased region" description="Pro residues" evidence="1">
    <location>
        <begin position="2131"/>
        <end position="2143"/>
    </location>
</feature>
<feature type="modified residue" description="Phosphoserine" evidence="17">
    <location>
        <position position="28"/>
    </location>
</feature>
<feature type="modified residue" description="Phosphoserine" evidence="16">
    <location>
        <position position="73"/>
    </location>
</feature>
<feature type="modified residue" description="Phosphoserine" evidence="16">
    <location>
        <position position="144"/>
    </location>
</feature>
<feature type="modified residue" description="Phosphoserine" evidence="16 17">
    <location>
        <position position="313"/>
    </location>
</feature>
<feature type="modified residue" description="Phosphoserine" evidence="17">
    <location>
        <position position="472"/>
    </location>
</feature>
<feature type="modified residue" description="Phosphoserine" evidence="15 17">
    <location>
        <position position="483"/>
    </location>
</feature>
<feature type="modified residue" description="Phosphothreonine" evidence="17">
    <location>
        <position position="595"/>
    </location>
</feature>
<feature type="modified residue" description="Phosphoserine" evidence="14 16 17">
    <location>
        <position position="607"/>
    </location>
</feature>
<feature type="modified residue" description="Phosphoserine" evidence="17">
    <location>
        <position position="660"/>
    </location>
</feature>
<feature type="modified residue" description="Phosphoserine" evidence="17">
    <location>
        <position position="663"/>
    </location>
</feature>
<feature type="modified residue" description="Phosphoserine" evidence="17">
    <location>
        <position position="665"/>
    </location>
</feature>
<feature type="modified residue" description="Phosphoserine" evidence="15 17">
    <location>
        <position position="674"/>
    </location>
</feature>
<feature type="modified residue" description="Phosphoserine" evidence="16 17">
    <location>
        <position position="678"/>
    </location>
</feature>
<feature type="modified residue" description="Phosphoserine" evidence="16 17">
    <location>
        <position position="681"/>
    </location>
</feature>
<feature type="modified residue" description="Phosphoserine" evidence="17">
    <location>
        <position position="701"/>
    </location>
</feature>
<feature type="modified residue" description="Phosphoserine" evidence="15 16 17">
    <location>
        <position position="704"/>
    </location>
</feature>
<feature type="modified residue" description="Phosphoserine" evidence="14 15 16 17">
    <location>
        <position position="706"/>
    </location>
</feature>
<feature type="modified residue" description="Phosphoserine" evidence="15 16 17">
    <location>
        <position position="759"/>
    </location>
</feature>
<feature type="modified residue" description="Phosphoserine" evidence="15 17">
    <location>
        <position position="762"/>
    </location>
</feature>
<feature type="modified residue" description="Phosphoserine" evidence="15 17">
    <location>
        <position position="765"/>
    </location>
</feature>
<feature type="modified residue" description="Phosphoserine" evidence="17">
    <location>
        <position position="768"/>
    </location>
</feature>
<feature type="modified residue" description="Phosphoserine" evidence="15">
    <location>
        <position position="843"/>
    </location>
</feature>
<feature type="modified residue" description="Phosphoserine" evidence="15 16">
    <location>
        <position position="1511"/>
    </location>
</feature>
<feature type="modified residue" description="Phosphoserine" evidence="14 15 16 17">
    <location>
        <position position="1515"/>
    </location>
</feature>
<feature type="modified residue" description="Phosphoserine" evidence="14">
    <location>
        <position position="1578"/>
    </location>
</feature>
<feature type="modified residue" description="Phosphoserine" evidence="17">
    <location>
        <position position="1602"/>
    </location>
</feature>
<feature type="modified residue" description="Phosphoserine" evidence="15 17">
    <location>
        <position position="1603"/>
    </location>
</feature>
<feature type="modified residue" description="Phosphoserine" evidence="15 17">
    <location>
        <position position="1611"/>
    </location>
</feature>
<feature type="modified residue" description="Phosphoserine" evidence="17">
    <location>
        <position position="1617"/>
    </location>
</feature>
<feature type="modified residue" description="Phosphoserine" evidence="16">
    <location>
        <position position="1778"/>
    </location>
</feature>
<feature type="modified residue" description="Phosphoserine" evidence="16">
    <location>
        <position position="1875"/>
    </location>
</feature>
<feature type="modified residue" description="Phosphoserine" evidence="17">
    <location>
        <position position="1973"/>
    </location>
</feature>
<feature type="modified residue" description="Phosphoserine" evidence="15 16 17">
    <location>
        <position position="1986"/>
    </location>
</feature>
<feature type="modified residue" description="Phosphoserine" evidence="17">
    <location>
        <position position="1992"/>
    </location>
</feature>
<feature type="modified residue" description="Phosphothreonine" evidence="15">
    <location>
        <position position="2049"/>
    </location>
</feature>
<feature type="modified residue" description="Phosphoserine" evidence="16">
    <location>
        <position position="2130"/>
    </location>
</feature>
<feature type="mutagenesis site" description="In SEC16-4; ts accumulation of ER membranes." evidence="8">
    <original>L</original>
    <variation>S</variation>
    <location>
        <position position="1059"/>
    </location>
</feature>
<feature type="mutagenesis site" description="In SEC16-3; ts accumulation of ER membranes." evidence="8">
    <original>L</original>
    <variation>P</variation>
    <location>
        <position position="1084"/>
    </location>
</feature>
<feature type="mutagenesis site" description="In SEC16-2; ts accumulation of ER membranes." evidence="8">
    <original>L</original>
    <variation>P</variation>
    <location>
        <position position="1089"/>
    </location>
</feature>
<feature type="mutagenesis site" description="In SEC16-1; ts accumulation of ER membranes." evidence="8">
    <original>W</original>
    <variation>R</variation>
    <location>
        <position position="1231"/>
    </location>
</feature>
<feature type="sequence conflict" description="In Ref. 1; AAC49088." evidence="13" ref="1">
    <location>
        <position position="522"/>
    </location>
</feature>
<feature type="sequence conflict" description="In Ref. 1; AAC49088." evidence="13" ref="1">
    <original>I</original>
    <variation>F</variation>
    <location>
        <position position="560"/>
    </location>
</feature>
<feature type="strand" evidence="18">
    <location>
        <begin position="995"/>
        <end position="998"/>
    </location>
</feature>
<feature type="strand" evidence="18">
    <location>
        <begin position="1002"/>
        <end position="1007"/>
    </location>
</feature>
<feature type="strand" evidence="18">
    <location>
        <begin position="1027"/>
        <end position="1031"/>
    </location>
</feature>
<feature type="helix" evidence="18">
    <location>
        <begin position="1032"/>
        <end position="1034"/>
    </location>
</feature>
<feature type="helix" evidence="18">
    <location>
        <begin position="1040"/>
        <end position="1044"/>
    </location>
</feature>
<feature type="helix" evidence="18">
    <location>
        <begin position="1056"/>
        <end position="1073"/>
    </location>
</feature>
<feature type="helix" evidence="18">
    <location>
        <begin position="1080"/>
        <end position="1090"/>
    </location>
</feature>
<feature type="helix" evidence="18">
    <location>
        <begin position="1095"/>
        <end position="1102"/>
    </location>
</feature>
<feature type="helix" evidence="18">
    <location>
        <begin position="1106"/>
        <end position="1113"/>
    </location>
</feature>
<feature type="helix" evidence="18">
    <location>
        <begin position="1130"/>
        <end position="1141"/>
    </location>
</feature>
<feature type="helix" evidence="18">
    <location>
        <begin position="1145"/>
        <end position="1154"/>
    </location>
</feature>
<feature type="helix" evidence="18">
    <location>
        <begin position="1158"/>
        <end position="1166"/>
    </location>
</feature>
<feature type="helix" evidence="18">
    <location>
        <begin position="1170"/>
        <end position="1182"/>
    </location>
</feature>
<feature type="helix" evidence="18">
    <location>
        <begin position="1193"/>
        <end position="1205"/>
    </location>
</feature>
<feature type="turn" evidence="18">
    <location>
        <begin position="1206"/>
        <end position="1208"/>
    </location>
</feature>
<feature type="helix" evidence="18">
    <location>
        <begin position="1210"/>
        <end position="1219"/>
    </location>
</feature>
<feature type="helix" evidence="18">
    <location>
        <begin position="1221"/>
        <end position="1229"/>
    </location>
</feature>
<feature type="helix" evidence="18">
    <location>
        <begin position="1231"/>
        <end position="1240"/>
    </location>
</feature>
<feature type="helix" evidence="18">
    <location>
        <begin position="1254"/>
        <end position="1269"/>
    </location>
</feature>
<feature type="helix" evidence="18">
    <location>
        <begin position="1273"/>
        <end position="1282"/>
    </location>
</feature>
<feature type="strand" evidence="18">
    <location>
        <begin position="1288"/>
        <end position="1293"/>
    </location>
</feature>
<feature type="helix" evidence="18">
    <location>
        <begin position="1309"/>
        <end position="1323"/>
    </location>
</feature>
<feature type="helix" evidence="18">
    <location>
        <begin position="1332"/>
        <end position="1334"/>
    </location>
</feature>
<feature type="helix" evidence="18">
    <location>
        <begin position="1335"/>
        <end position="1347"/>
    </location>
</feature>
<feature type="helix" evidence="18">
    <location>
        <begin position="1351"/>
        <end position="1366"/>
    </location>
</feature>
<feature type="helix" evidence="18">
    <location>
        <begin position="1373"/>
        <end position="1388"/>
    </location>
</feature>